<accession>A6MVX4</accession>
<reference key="1">
    <citation type="journal article" date="2007" name="Mol. Biol. Evol.">
        <title>Plastid genome sequence of the cryptophyte alga Rhodomonas salina CCMP1319: lateral transfer of putative DNA replication machinery and a test of chromist plastid phylogeny.</title>
        <authorList>
            <person name="Khan H."/>
            <person name="Parks N."/>
            <person name="Kozera C."/>
            <person name="Curtis B.A."/>
            <person name="Parsons B.J."/>
            <person name="Bowman S."/>
            <person name="Archibald J.M."/>
        </authorList>
    </citation>
    <scope>NUCLEOTIDE SEQUENCE [LARGE SCALE GENOMIC DNA]</scope>
    <source>
        <strain>CCMP1319 / NEPCC76 / CS-174</strain>
    </source>
</reference>
<geneLocation type="chloroplast"/>
<name>RPOB_RHDSA</name>
<sequence length="1097" mass="123025">MSSTKLSTSILPDLVEIQRASFCWFLEEGLAEEIKSFSPITDYTGNLELHFFGDQFKLKCPKYNLLESKRRDATYSVQVYVPARLINRDTGIIKEQEVFIGDLPLMTDRGTFIINGAERVIVNQIVRSPGIYYKSETDRQGRRTYSGSLISNRGAWVKFETDRNDLVWVRIDKTRKIPAHVFLKAMGLSDSDIYNGLRHPEYLKKSFRVEGNYTTEEALIQMYTKLRPGEPATVNGGQQILYSRFFDPKRYDLGKVGRYKINKKLALSIPENIKVLTPQDTLSAIDYLINLKFNIGETDDIDHLGNRRVRSVGELLQNQVRVGLNRLERIIRERMTICDSESLAPNTLVNPKPIIAAIREFFGSSQLSQFMDQTNPLAELTHKRRISALGPGGLNRDRAGFAVRDIHPSHYGRICPIETPEGPNAGLIGVLATHARINSYGFIETPFYQVINGKVVSDGNPVYLTADQEDNFRIAPGDIAIDENNAINNDIVPVRYRQEFTITKPEQIDYIQVSPIQVISIATSLIPFLEHDDANRALMGSNMQRQAVPLLYPESPLIGTGIEAQAARDSGMVVVSYQDGRVTYVSANKICITDDEGKEVVYYLQKYQRSNQDTCINQRPSVWLGEKVVAGQVIADGAATEGGELALGQNILIAYLPWEGYNYEDAFLISERLVYNDVYTSVHIEKYEIEARQTKLGSEEITRELPNIGEYSLRKLDDNGIIVIGSWVEVGDILVGKVTPKGESDQPPEGKLLRAIFGEKARDVRDTSLRVPNGGRGRVLDVRIFTREKGDELPTGANIVIRVYVAQTRKIQVGDKMAGRHGNKGIISRILPRQDMPYLPDGTPVDLVLNPLGVPSRMNVGQIFECLLGLAAENLDKRFKIIPFDEMNGAEASRVLVNEKLMEARTLTEKDWIFDLRHPGKTQLFDGRTGEAFDNPVTVGISYMLKLVHLVDDKIHARSTGPYSLVTQQPLGGKAQHGGQRLGEMEVWALEAFGASYTLQELLTVKSDDMQGRNETLNAIVKGKPIPRPGTPESFKVLMRELQSLGLDIGAYKIENLPDGQTRGIEVDLMSNLHNRRVPSRPTYESITREDLENSFA</sequence>
<proteinExistence type="inferred from homology"/>
<dbReference type="EC" id="2.7.7.6" evidence="1"/>
<dbReference type="EMBL" id="EF508371">
    <property type="protein sequence ID" value="ABO70811.1"/>
    <property type="molecule type" value="Genomic_DNA"/>
</dbReference>
<dbReference type="RefSeq" id="YP_001293553.1">
    <property type="nucleotide sequence ID" value="NC_009573.1"/>
</dbReference>
<dbReference type="SMR" id="A6MVX4"/>
<dbReference type="GeneID" id="5228507"/>
<dbReference type="GO" id="GO:0009507">
    <property type="term" value="C:chloroplast"/>
    <property type="evidence" value="ECO:0007669"/>
    <property type="project" value="UniProtKB-SubCell"/>
</dbReference>
<dbReference type="GO" id="GO:0000428">
    <property type="term" value="C:DNA-directed RNA polymerase complex"/>
    <property type="evidence" value="ECO:0007669"/>
    <property type="project" value="UniProtKB-KW"/>
</dbReference>
<dbReference type="GO" id="GO:0005739">
    <property type="term" value="C:mitochondrion"/>
    <property type="evidence" value="ECO:0007669"/>
    <property type="project" value="GOC"/>
</dbReference>
<dbReference type="GO" id="GO:0003677">
    <property type="term" value="F:DNA binding"/>
    <property type="evidence" value="ECO:0007669"/>
    <property type="project" value="UniProtKB-UniRule"/>
</dbReference>
<dbReference type="GO" id="GO:0003899">
    <property type="term" value="F:DNA-directed RNA polymerase activity"/>
    <property type="evidence" value="ECO:0007669"/>
    <property type="project" value="UniProtKB-UniRule"/>
</dbReference>
<dbReference type="GO" id="GO:0032549">
    <property type="term" value="F:ribonucleoside binding"/>
    <property type="evidence" value="ECO:0007669"/>
    <property type="project" value="InterPro"/>
</dbReference>
<dbReference type="GO" id="GO:0006351">
    <property type="term" value="P:DNA-templated transcription"/>
    <property type="evidence" value="ECO:0007669"/>
    <property type="project" value="UniProtKB-UniRule"/>
</dbReference>
<dbReference type="CDD" id="cd00653">
    <property type="entry name" value="RNA_pol_B_RPB2"/>
    <property type="match status" value="1"/>
</dbReference>
<dbReference type="Gene3D" id="2.40.50.100">
    <property type="match status" value="1"/>
</dbReference>
<dbReference type="Gene3D" id="2.40.50.150">
    <property type="match status" value="1"/>
</dbReference>
<dbReference type="Gene3D" id="3.90.1100.10">
    <property type="match status" value="1"/>
</dbReference>
<dbReference type="Gene3D" id="2.30.150.10">
    <property type="entry name" value="DNA-directed RNA polymerase, beta subunit, external 1 domain"/>
    <property type="match status" value="1"/>
</dbReference>
<dbReference type="Gene3D" id="2.40.270.10">
    <property type="entry name" value="DNA-directed RNA polymerase, subunit 2, domain 6"/>
    <property type="match status" value="1"/>
</dbReference>
<dbReference type="Gene3D" id="3.90.1800.10">
    <property type="entry name" value="RNA polymerase alpha subunit dimerisation domain"/>
    <property type="match status" value="1"/>
</dbReference>
<dbReference type="Gene3D" id="3.90.1110.10">
    <property type="entry name" value="RNA polymerase Rpb2, domain 2"/>
    <property type="match status" value="1"/>
</dbReference>
<dbReference type="HAMAP" id="MF_01321">
    <property type="entry name" value="RNApol_bact_RpoB"/>
    <property type="match status" value="1"/>
</dbReference>
<dbReference type="InterPro" id="IPR042107">
    <property type="entry name" value="DNA-dir_RNA_pol_bsu_ext_1_sf"/>
</dbReference>
<dbReference type="InterPro" id="IPR019462">
    <property type="entry name" value="DNA-dir_RNA_pol_bsu_external_1"/>
</dbReference>
<dbReference type="InterPro" id="IPR015712">
    <property type="entry name" value="DNA-dir_RNA_pol_su2"/>
</dbReference>
<dbReference type="InterPro" id="IPR007120">
    <property type="entry name" value="DNA-dir_RNAP_su2_dom"/>
</dbReference>
<dbReference type="InterPro" id="IPR037033">
    <property type="entry name" value="DNA-dir_RNAP_su2_hyb_sf"/>
</dbReference>
<dbReference type="InterPro" id="IPR010243">
    <property type="entry name" value="RNA_pol_bsu_bac"/>
</dbReference>
<dbReference type="InterPro" id="IPR007121">
    <property type="entry name" value="RNA_pol_bsu_CS"/>
</dbReference>
<dbReference type="InterPro" id="IPR007644">
    <property type="entry name" value="RNA_pol_bsu_protrusion"/>
</dbReference>
<dbReference type="InterPro" id="IPR007642">
    <property type="entry name" value="RNA_pol_Rpb2_2"/>
</dbReference>
<dbReference type="InterPro" id="IPR037034">
    <property type="entry name" value="RNA_pol_Rpb2_2_sf"/>
</dbReference>
<dbReference type="InterPro" id="IPR007645">
    <property type="entry name" value="RNA_pol_Rpb2_3"/>
</dbReference>
<dbReference type="InterPro" id="IPR007641">
    <property type="entry name" value="RNA_pol_Rpb2_7"/>
</dbReference>
<dbReference type="InterPro" id="IPR014724">
    <property type="entry name" value="RNA_pol_RPB2_OB-fold"/>
</dbReference>
<dbReference type="NCBIfam" id="NF001616">
    <property type="entry name" value="PRK00405.1"/>
    <property type="match status" value="1"/>
</dbReference>
<dbReference type="NCBIfam" id="TIGR02013">
    <property type="entry name" value="rpoB"/>
    <property type="match status" value="1"/>
</dbReference>
<dbReference type="PANTHER" id="PTHR20856">
    <property type="entry name" value="DNA-DIRECTED RNA POLYMERASE I SUBUNIT 2"/>
    <property type="match status" value="1"/>
</dbReference>
<dbReference type="Pfam" id="PF04563">
    <property type="entry name" value="RNA_pol_Rpb2_1"/>
    <property type="match status" value="1"/>
</dbReference>
<dbReference type="Pfam" id="PF04561">
    <property type="entry name" value="RNA_pol_Rpb2_2"/>
    <property type="match status" value="1"/>
</dbReference>
<dbReference type="Pfam" id="PF04565">
    <property type="entry name" value="RNA_pol_Rpb2_3"/>
    <property type="match status" value="1"/>
</dbReference>
<dbReference type="Pfam" id="PF10385">
    <property type="entry name" value="RNA_pol_Rpb2_45"/>
    <property type="match status" value="1"/>
</dbReference>
<dbReference type="Pfam" id="PF00562">
    <property type="entry name" value="RNA_pol_Rpb2_6"/>
    <property type="match status" value="1"/>
</dbReference>
<dbReference type="Pfam" id="PF04560">
    <property type="entry name" value="RNA_pol_Rpb2_7"/>
    <property type="match status" value="1"/>
</dbReference>
<dbReference type="SUPFAM" id="SSF64484">
    <property type="entry name" value="beta and beta-prime subunits of DNA dependent RNA-polymerase"/>
    <property type="match status" value="1"/>
</dbReference>
<dbReference type="PROSITE" id="PS01166">
    <property type="entry name" value="RNA_POL_BETA"/>
    <property type="match status" value="1"/>
</dbReference>
<evidence type="ECO:0000255" key="1">
    <source>
        <dbReference type="HAMAP-Rule" id="MF_01321"/>
    </source>
</evidence>
<protein>
    <recommendedName>
        <fullName evidence="1">DNA-directed RNA polymerase subunit beta</fullName>
        <ecNumber evidence="1">2.7.7.6</ecNumber>
    </recommendedName>
    <alternativeName>
        <fullName evidence="1">PEP</fullName>
    </alternativeName>
    <alternativeName>
        <fullName evidence="1">Plastid-encoded RNA polymerase subunit beta</fullName>
        <shortName evidence="1">RNA polymerase subunit beta</shortName>
    </alternativeName>
</protein>
<comment type="function">
    <text evidence="1">DNA-dependent RNA polymerase catalyzes the transcription of DNA into RNA using the four ribonucleoside triphosphates as substrates.</text>
</comment>
<comment type="catalytic activity">
    <reaction evidence="1">
        <text>RNA(n) + a ribonucleoside 5'-triphosphate = RNA(n+1) + diphosphate</text>
        <dbReference type="Rhea" id="RHEA:21248"/>
        <dbReference type="Rhea" id="RHEA-COMP:14527"/>
        <dbReference type="Rhea" id="RHEA-COMP:17342"/>
        <dbReference type="ChEBI" id="CHEBI:33019"/>
        <dbReference type="ChEBI" id="CHEBI:61557"/>
        <dbReference type="ChEBI" id="CHEBI:140395"/>
        <dbReference type="EC" id="2.7.7.6"/>
    </reaction>
</comment>
<comment type="subunit">
    <text evidence="1">In plastids the minimal PEP RNA polymerase catalytic core is composed of four subunits: alpha, beta, beta', and beta''. When a (nuclear-encoded) sigma factor is associated with the core the holoenzyme is formed, which can initiate transcription.</text>
</comment>
<comment type="subcellular location">
    <subcellularLocation>
        <location>Plastid</location>
        <location>Chloroplast</location>
    </subcellularLocation>
</comment>
<comment type="similarity">
    <text evidence="1">Belongs to the RNA polymerase beta chain family.</text>
</comment>
<feature type="chain" id="PRO_0000300457" description="DNA-directed RNA polymerase subunit beta">
    <location>
        <begin position="1"/>
        <end position="1097"/>
    </location>
</feature>
<keyword id="KW-0150">Chloroplast</keyword>
<keyword id="KW-0240">DNA-directed RNA polymerase</keyword>
<keyword id="KW-0548">Nucleotidyltransferase</keyword>
<keyword id="KW-0934">Plastid</keyword>
<keyword id="KW-0804">Transcription</keyword>
<keyword id="KW-0808">Transferase</keyword>
<organism>
    <name type="scientific">Rhodomonas salina</name>
    <name type="common">Cryptomonas salina</name>
    <dbReference type="NCBI Taxonomy" id="52970"/>
    <lineage>
        <taxon>Eukaryota</taxon>
        <taxon>Cryptophyceae</taxon>
        <taxon>Pyrenomonadales</taxon>
        <taxon>Pyrenomonadaceae</taxon>
        <taxon>Rhodomonas</taxon>
    </lineage>
</organism>
<gene>
    <name evidence="1" type="primary">rpoB</name>
</gene>